<dbReference type="EC" id="1.2.1.41" evidence="1"/>
<dbReference type="EMBL" id="BA000034">
    <property type="protein sequence ID" value="BAC63553.1"/>
    <property type="molecule type" value="Genomic_DNA"/>
</dbReference>
<dbReference type="RefSeq" id="WP_011054854.1">
    <property type="nucleotide sequence ID" value="NC_004606.1"/>
</dbReference>
<dbReference type="SMR" id="P0DD21"/>
<dbReference type="KEGG" id="sps:SPs0458"/>
<dbReference type="HOGENOM" id="CLU_030231_0_0_9"/>
<dbReference type="UniPathway" id="UPA00098">
    <property type="reaction ID" value="UER00360"/>
</dbReference>
<dbReference type="GO" id="GO:0005737">
    <property type="term" value="C:cytoplasm"/>
    <property type="evidence" value="ECO:0007669"/>
    <property type="project" value="UniProtKB-SubCell"/>
</dbReference>
<dbReference type="GO" id="GO:0004350">
    <property type="term" value="F:glutamate-5-semialdehyde dehydrogenase activity"/>
    <property type="evidence" value="ECO:0007669"/>
    <property type="project" value="UniProtKB-UniRule"/>
</dbReference>
<dbReference type="GO" id="GO:0050661">
    <property type="term" value="F:NADP binding"/>
    <property type="evidence" value="ECO:0007669"/>
    <property type="project" value="InterPro"/>
</dbReference>
<dbReference type="GO" id="GO:0055129">
    <property type="term" value="P:L-proline biosynthetic process"/>
    <property type="evidence" value="ECO:0007669"/>
    <property type="project" value="UniProtKB-UniRule"/>
</dbReference>
<dbReference type="CDD" id="cd07079">
    <property type="entry name" value="ALDH_F18-19_ProA-GPR"/>
    <property type="match status" value="1"/>
</dbReference>
<dbReference type="FunFam" id="3.40.309.10:FF:000006">
    <property type="entry name" value="Gamma-glutamyl phosphate reductase"/>
    <property type="match status" value="1"/>
</dbReference>
<dbReference type="Gene3D" id="3.40.605.10">
    <property type="entry name" value="Aldehyde Dehydrogenase, Chain A, domain 1"/>
    <property type="match status" value="1"/>
</dbReference>
<dbReference type="Gene3D" id="3.40.309.10">
    <property type="entry name" value="Aldehyde Dehydrogenase, Chain A, domain 2"/>
    <property type="match status" value="1"/>
</dbReference>
<dbReference type="HAMAP" id="MF_00412">
    <property type="entry name" value="ProA"/>
    <property type="match status" value="1"/>
</dbReference>
<dbReference type="InterPro" id="IPR016161">
    <property type="entry name" value="Ald_DH/histidinol_DH"/>
</dbReference>
<dbReference type="InterPro" id="IPR016163">
    <property type="entry name" value="Ald_DH_C"/>
</dbReference>
<dbReference type="InterPro" id="IPR016162">
    <property type="entry name" value="Ald_DH_N"/>
</dbReference>
<dbReference type="InterPro" id="IPR015590">
    <property type="entry name" value="Aldehyde_DH_dom"/>
</dbReference>
<dbReference type="InterPro" id="IPR020593">
    <property type="entry name" value="G-glutamylP_reductase_CS"/>
</dbReference>
<dbReference type="InterPro" id="IPR012134">
    <property type="entry name" value="Glu-5-SA_DH"/>
</dbReference>
<dbReference type="InterPro" id="IPR000965">
    <property type="entry name" value="GPR_dom"/>
</dbReference>
<dbReference type="NCBIfam" id="NF001221">
    <property type="entry name" value="PRK00197.1"/>
    <property type="match status" value="1"/>
</dbReference>
<dbReference type="NCBIfam" id="TIGR00407">
    <property type="entry name" value="proA"/>
    <property type="match status" value="1"/>
</dbReference>
<dbReference type="PANTHER" id="PTHR11063:SF8">
    <property type="entry name" value="DELTA-1-PYRROLINE-5-CARBOXYLATE SYNTHASE"/>
    <property type="match status" value="1"/>
</dbReference>
<dbReference type="PANTHER" id="PTHR11063">
    <property type="entry name" value="GLUTAMATE SEMIALDEHYDE DEHYDROGENASE"/>
    <property type="match status" value="1"/>
</dbReference>
<dbReference type="Pfam" id="PF00171">
    <property type="entry name" value="Aldedh"/>
    <property type="match status" value="2"/>
</dbReference>
<dbReference type="PIRSF" id="PIRSF000151">
    <property type="entry name" value="GPR"/>
    <property type="match status" value="1"/>
</dbReference>
<dbReference type="SUPFAM" id="SSF53720">
    <property type="entry name" value="ALDH-like"/>
    <property type="match status" value="1"/>
</dbReference>
<dbReference type="PROSITE" id="PS01223">
    <property type="entry name" value="PROA"/>
    <property type="match status" value="1"/>
</dbReference>
<protein>
    <recommendedName>
        <fullName evidence="1">Gamma-glutamyl phosphate reductase</fullName>
        <shortName evidence="1">GPR</shortName>
        <ecNumber evidence="1">1.2.1.41</ecNumber>
    </recommendedName>
    <alternativeName>
        <fullName evidence="1">Glutamate-5-semialdehyde dehydrogenase</fullName>
    </alternativeName>
    <alternativeName>
        <fullName evidence="1">Glutamyl-gamma-semialdehyde dehydrogenase</fullName>
        <shortName evidence="1">GSA dehydrogenase</shortName>
    </alternativeName>
</protein>
<keyword id="KW-0028">Amino-acid biosynthesis</keyword>
<keyword id="KW-0963">Cytoplasm</keyword>
<keyword id="KW-0521">NADP</keyword>
<keyword id="KW-0560">Oxidoreductase</keyword>
<keyword id="KW-0641">Proline biosynthesis</keyword>
<proteinExistence type="inferred from homology"/>
<feature type="chain" id="PRO_0000411448" description="Gamma-glutamyl phosphate reductase">
    <location>
        <begin position="1"/>
        <end position="416"/>
    </location>
</feature>
<reference key="1">
    <citation type="journal article" date="2003" name="Genome Res.">
        <title>Genome sequence of an M3 strain of Streptococcus pyogenes reveals a large-scale genomic rearrangement in invasive strains and new insights into phage evolution.</title>
        <authorList>
            <person name="Nakagawa I."/>
            <person name="Kurokawa K."/>
            <person name="Yamashita A."/>
            <person name="Nakata M."/>
            <person name="Tomiyasu Y."/>
            <person name="Okahashi N."/>
            <person name="Kawabata S."/>
            <person name="Yamazaki K."/>
            <person name="Shiba T."/>
            <person name="Yasunaga T."/>
            <person name="Hayashi H."/>
            <person name="Hattori M."/>
            <person name="Hamada S."/>
        </authorList>
    </citation>
    <scope>NUCLEOTIDE SEQUENCE [LARGE SCALE GENOMIC DNA]</scope>
    <source>
        <strain>SSI-1</strain>
    </source>
</reference>
<organism>
    <name type="scientific">Streptococcus pyogenes serotype M3 (strain SSI-1)</name>
    <dbReference type="NCBI Taxonomy" id="193567"/>
    <lineage>
        <taxon>Bacteria</taxon>
        <taxon>Bacillati</taxon>
        <taxon>Bacillota</taxon>
        <taxon>Bacilli</taxon>
        <taxon>Lactobacillales</taxon>
        <taxon>Streptococcaceae</taxon>
        <taxon>Streptococcus</taxon>
    </lineage>
</organism>
<evidence type="ECO:0000255" key="1">
    <source>
        <dbReference type="HAMAP-Rule" id="MF_00412"/>
    </source>
</evidence>
<name>PROA_STRPQ</name>
<sequence length="416" mass="45418">MTDMRRLGQRAKQASLLIAPLSTQIKNRFLSTLAKALVDDTQTLLAANQKDLANAKEHGISDIMMDRLRLTSERIKAIAQGVQQVADLADPIGQVIKGYTNLDGLKILQKRVPLGVIAMIFESRPNVSVDAFSLAFKTNNAIILRGGKDALYSNKALVKLIRQSLEESGITPDAVQLVEDPSHAVAEELMQATDYVDVLIPRGGAKLIQTVKEKAKVPVIETGVGNVHIYVDAQADLDMATKIVINAKTKRPSVCNAAEGLVIHEAVAARFIPMLEKAINQVQPVEWRADDKALPLFEQAVPAKAEDFETEFLDYIMSVKVVSSLEEAISWINQHTSHHSEAIITRDTKAAETFQDLVDAAAVYVNASTRFTDGFVFGLGAEIGISTQKIHARGPMGLEALTSTKFYINGDGHIRE</sequence>
<accession>P0DD21</accession>
<accession>Q8K6C2</accession>
<comment type="function">
    <text evidence="1">Catalyzes the NADPH-dependent reduction of L-glutamate 5-phosphate into L-glutamate 5-semialdehyde and phosphate. The product spontaneously undergoes cyclization to form 1-pyrroline-5-carboxylate.</text>
</comment>
<comment type="catalytic activity">
    <reaction evidence="1">
        <text>L-glutamate 5-semialdehyde + phosphate + NADP(+) = L-glutamyl 5-phosphate + NADPH + H(+)</text>
        <dbReference type="Rhea" id="RHEA:19541"/>
        <dbReference type="ChEBI" id="CHEBI:15378"/>
        <dbReference type="ChEBI" id="CHEBI:43474"/>
        <dbReference type="ChEBI" id="CHEBI:57783"/>
        <dbReference type="ChEBI" id="CHEBI:58066"/>
        <dbReference type="ChEBI" id="CHEBI:58274"/>
        <dbReference type="ChEBI" id="CHEBI:58349"/>
        <dbReference type="EC" id="1.2.1.41"/>
    </reaction>
</comment>
<comment type="pathway">
    <text evidence="1">Amino-acid biosynthesis; L-proline biosynthesis; L-glutamate 5-semialdehyde from L-glutamate: step 2/2.</text>
</comment>
<comment type="subcellular location">
    <subcellularLocation>
        <location evidence="1">Cytoplasm</location>
    </subcellularLocation>
</comment>
<comment type="similarity">
    <text evidence="1">Belongs to the gamma-glutamyl phosphate reductase family.</text>
</comment>
<gene>
    <name evidence="1" type="primary">proA</name>
    <name type="ordered locus">SPs0458</name>
</gene>